<feature type="chain" id="PRO_1000040548" description="6,7-dimethyl-8-ribityllumazine synthase">
    <location>
        <begin position="1"/>
        <end position="154"/>
    </location>
</feature>
<feature type="active site" description="Proton donor" evidence="1">
    <location>
        <position position="88"/>
    </location>
</feature>
<feature type="binding site" evidence="1">
    <location>
        <position position="22"/>
    </location>
    <ligand>
        <name>5-amino-6-(D-ribitylamino)uracil</name>
        <dbReference type="ChEBI" id="CHEBI:15934"/>
    </ligand>
</feature>
<feature type="binding site" evidence="1">
    <location>
        <begin position="56"/>
        <end position="58"/>
    </location>
    <ligand>
        <name>5-amino-6-(D-ribitylamino)uracil</name>
        <dbReference type="ChEBI" id="CHEBI:15934"/>
    </ligand>
</feature>
<feature type="binding site" evidence="1">
    <location>
        <begin position="80"/>
        <end position="82"/>
    </location>
    <ligand>
        <name>5-amino-6-(D-ribitylamino)uracil</name>
        <dbReference type="ChEBI" id="CHEBI:15934"/>
    </ligand>
</feature>
<feature type="binding site" evidence="1">
    <location>
        <begin position="85"/>
        <end position="86"/>
    </location>
    <ligand>
        <name>(2S)-2-hydroxy-3-oxobutyl phosphate</name>
        <dbReference type="ChEBI" id="CHEBI:58830"/>
    </ligand>
</feature>
<feature type="binding site" evidence="1">
    <location>
        <position position="113"/>
    </location>
    <ligand>
        <name>5-amino-6-(D-ribitylamino)uracil</name>
        <dbReference type="ChEBI" id="CHEBI:15934"/>
    </ligand>
</feature>
<feature type="binding site" evidence="1">
    <location>
        <position position="127"/>
    </location>
    <ligand>
        <name>(2S)-2-hydroxy-3-oxobutyl phosphate</name>
        <dbReference type="ChEBI" id="CHEBI:58830"/>
    </ligand>
</feature>
<keyword id="KW-0686">Riboflavin biosynthesis</keyword>
<keyword id="KW-0808">Transferase</keyword>
<accession>Q3BXI0</accession>
<sequence>MTHYEGDLRPTTARFAIIASRWNARITDVLVAGARQSLAGNGIGEDAIDVIRVPGAWEIPIAANRVAQSGQHGAIIALGCVIRGDTRHYEHVADLCAEGLMSVQLQTGVPVLNGVLAVERVEDAEARAGGSHGNKGEECALAALELVNLMELLP</sequence>
<comment type="function">
    <text evidence="1">Catalyzes the formation of 6,7-dimethyl-8-ribityllumazine by condensation of 5-amino-6-(D-ribitylamino)uracil with 3,4-dihydroxy-2-butanone 4-phosphate. This is the penultimate step in the biosynthesis of riboflavin.</text>
</comment>
<comment type="catalytic activity">
    <reaction evidence="1">
        <text>(2S)-2-hydroxy-3-oxobutyl phosphate + 5-amino-6-(D-ribitylamino)uracil = 6,7-dimethyl-8-(1-D-ribityl)lumazine + phosphate + 2 H2O + H(+)</text>
        <dbReference type="Rhea" id="RHEA:26152"/>
        <dbReference type="ChEBI" id="CHEBI:15377"/>
        <dbReference type="ChEBI" id="CHEBI:15378"/>
        <dbReference type="ChEBI" id="CHEBI:15934"/>
        <dbReference type="ChEBI" id="CHEBI:43474"/>
        <dbReference type="ChEBI" id="CHEBI:58201"/>
        <dbReference type="ChEBI" id="CHEBI:58830"/>
        <dbReference type="EC" id="2.5.1.78"/>
    </reaction>
</comment>
<comment type="pathway">
    <text evidence="1">Cofactor biosynthesis; riboflavin biosynthesis; riboflavin from 2-hydroxy-3-oxobutyl phosphate and 5-amino-6-(D-ribitylamino)uracil: step 1/2.</text>
</comment>
<comment type="subunit">
    <text evidence="1">Forms an icosahedral capsid composed of 60 subunits, arranged as a dodecamer of pentamers.</text>
</comment>
<comment type="similarity">
    <text evidence="1">Belongs to the DMRL synthase family.</text>
</comment>
<protein>
    <recommendedName>
        <fullName evidence="1">6,7-dimethyl-8-ribityllumazine synthase</fullName>
        <shortName evidence="1">DMRL synthase</shortName>
        <shortName evidence="1">LS</shortName>
        <shortName evidence="1">Lumazine synthase</shortName>
        <ecNumber evidence="1">2.5.1.78</ecNumber>
    </recommendedName>
</protein>
<name>RISB_XANE5</name>
<dbReference type="EC" id="2.5.1.78" evidence="1"/>
<dbReference type="EMBL" id="AM039952">
    <property type="protein sequence ID" value="CAJ22433.1"/>
    <property type="molecule type" value="Genomic_DNA"/>
</dbReference>
<dbReference type="RefSeq" id="WP_003490334.1">
    <property type="nucleotide sequence ID" value="NZ_CP017190.1"/>
</dbReference>
<dbReference type="SMR" id="Q3BXI0"/>
<dbReference type="STRING" id="456327.BJD11_18800"/>
<dbReference type="GeneID" id="97509135"/>
<dbReference type="KEGG" id="xcv:XCV0802"/>
<dbReference type="eggNOG" id="COG0054">
    <property type="taxonomic scope" value="Bacteria"/>
</dbReference>
<dbReference type="HOGENOM" id="CLU_089358_1_2_6"/>
<dbReference type="UniPathway" id="UPA00275">
    <property type="reaction ID" value="UER00404"/>
</dbReference>
<dbReference type="Proteomes" id="UP000007069">
    <property type="component" value="Chromosome"/>
</dbReference>
<dbReference type="GO" id="GO:0005829">
    <property type="term" value="C:cytosol"/>
    <property type="evidence" value="ECO:0007669"/>
    <property type="project" value="TreeGrafter"/>
</dbReference>
<dbReference type="GO" id="GO:0009349">
    <property type="term" value="C:riboflavin synthase complex"/>
    <property type="evidence" value="ECO:0007669"/>
    <property type="project" value="InterPro"/>
</dbReference>
<dbReference type="GO" id="GO:0000906">
    <property type="term" value="F:6,7-dimethyl-8-ribityllumazine synthase activity"/>
    <property type="evidence" value="ECO:0007669"/>
    <property type="project" value="UniProtKB-UniRule"/>
</dbReference>
<dbReference type="GO" id="GO:0009231">
    <property type="term" value="P:riboflavin biosynthetic process"/>
    <property type="evidence" value="ECO:0007669"/>
    <property type="project" value="UniProtKB-UniRule"/>
</dbReference>
<dbReference type="CDD" id="cd09209">
    <property type="entry name" value="Lumazine_synthase-I"/>
    <property type="match status" value="1"/>
</dbReference>
<dbReference type="FunFam" id="3.40.50.960:FF:000004">
    <property type="entry name" value="6,7-dimethyl-8-ribityllumazine synthase"/>
    <property type="match status" value="1"/>
</dbReference>
<dbReference type="Gene3D" id="3.40.50.960">
    <property type="entry name" value="Lumazine/riboflavin synthase"/>
    <property type="match status" value="1"/>
</dbReference>
<dbReference type="HAMAP" id="MF_00178">
    <property type="entry name" value="Lumazine_synth"/>
    <property type="match status" value="1"/>
</dbReference>
<dbReference type="InterPro" id="IPR034964">
    <property type="entry name" value="LS"/>
</dbReference>
<dbReference type="InterPro" id="IPR002180">
    <property type="entry name" value="LS/RS"/>
</dbReference>
<dbReference type="InterPro" id="IPR036467">
    <property type="entry name" value="LS/RS_sf"/>
</dbReference>
<dbReference type="NCBIfam" id="TIGR00114">
    <property type="entry name" value="lumazine-synth"/>
    <property type="match status" value="1"/>
</dbReference>
<dbReference type="PANTHER" id="PTHR21058:SF0">
    <property type="entry name" value="6,7-DIMETHYL-8-RIBITYLLUMAZINE SYNTHASE"/>
    <property type="match status" value="1"/>
</dbReference>
<dbReference type="PANTHER" id="PTHR21058">
    <property type="entry name" value="6,7-DIMETHYL-8-RIBITYLLUMAZINE SYNTHASE DMRL SYNTHASE LUMAZINE SYNTHASE"/>
    <property type="match status" value="1"/>
</dbReference>
<dbReference type="Pfam" id="PF00885">
    <property type="entry name" value="DMRL_synthase"/>
    <property type="match status" value="1"/>
</dbReference>
<dbReference type="SUPFAM" id="SSF52121">
    <property type="entry name" value="Lumazine synthase"/>
    <property type="match status" value="1"/>
</dbReference>
<organism>
    <name type="scientific">Xanthomonas euvesicatoria pv. vesicatoria (strain 85-10)</name>
    <name type="common">Xanthomonas campestris pv. vesicatoria</name>
    <dbReference type="NCBI Taxonomy" id="316273"/>
    <lineage>
        <taxon>Bacteria</taxon>
        <taxon>Pseudomonadati</taxon>
        <taxon>Pseudomonadota</taxon>
        <taxon>Gammaproteobacteria</taxon>
        <taxon>Lysobacterales</taxon>
        <taxon>Lysobacteraceae</taxon>
        <taxon>Xanthomonas</taxon>
    </lineage>
</organism>
<gene>
    <name evidence="1" type="primary">ribH</name>
    <name type="ordered locus">XCV0802</name>
</gene>
<evidence type="ECO:0000255" key="1">
    <source>
        <dbReference type="HAMAP-Rule" id="MF_00178"/>
    </source>
</evidence>
<proteinExistence type="inferred from homology"/>
<reference key="1">
    <citation type="journal article" date="2005" name="J. Bacteriol.">
        <title>Insights into genome plasticity and pathogenicity of the plant pathogenic Bacterium Xanthomonas campestris pv. vesicatoria revealed by the complete genome sequence.</title>
        <authorList>
            <person name="Thieme F."/>
            <person name="Koebnik R."/>
            <person name="Bekel T."/>
            <person name="Berger C."/>
            <person name="Boch J."/>
            <person name="Buettner D."/>
            <person name="Caldana C."/>
            <person name="Gaigalat L."/>
            <person name="Goesmann A."/>
            <person name="Kay S."/>
            <person name="Kirchner O."/>
            <person name="Lanz C."/>
            <person name="Linke B."/>
            <person name="McHardy A.C."/>
            <person name="Meyer F."/>
            <person name="Mittenhuber G."/>
            <person name="Nies D.H."/>
            <person name="Niesbach-Kloesgen U."/>
            <person name="Patschkowski T."/>
            <person name="Rueckert C."/>
            <person name="Rupp O."/>
            <person name="Schneiker S."/>
            <person name="Schuster S.C."/>
            <person name="Vorhoelter F.J."/>
            <person name="Weber E."/>
            <person name="Puehler A."/>
            <person name="Bonas U."/>
            <person name="Bartels D."/>
            <person name="Kaiser O."/>
        </authorList>
    </citation>
    <scope>NUCLEOTIDE SEQUENCE [LARGE SCALE GENOMIC DNA]</scope>
    <source>
        <strain>85-10</strain>
    </source>
</reference>